<reference key="1">
    <citation type="journal article" date="2009" name="BMC Genomics">
        <title>Metabolic analysis of the soil microbe Dechloromonas aromatica str. RCB: indications of a surprisingly complex life-style and cryptic anaerobic pathways for aromatic degradation.</title>
        <authorList>
            <person name="Salinero K.K."/>
            <person name="Keller K."/>
            <person name="Feil W.S."/>
            <person name="Feil H."/>
            <person name="Trong S."/>
            <person name="Di Bartolo G."/>
            <person name="Lapidus A."/>
        </authorList>
    </citation>
    <scope>NUCLEOTIDE SEQUENCE [LARGE SCALE GENOMIC DNA]</scope>
    <source>
        <strain>RCB</strain>
    </source>
</reference>
<accession>Q47BA6</accession>
<comment type="function">
    <text evidence="1">Required for disulfide bond formation in some periplasmic proteins. Acts by oxidizing the DsbA protein.</text>
</comment>
<comment type="subcellular location">
    <subcellularLocation>
        <location evidence="1">Cell inner membrane</location>
        <topology evidence="1">Multi-pass membrane protein</topology>
    </subcellularLocation>
</comment>
<comment type="similarity">
    <text evidence="1">Belongs to the DsbB family.</text>
</comment>
<keyword id="KW-0997">Cell inner membrane</keyword>
<keyword id="KW-1003">Cell membrane</keyword>
<keyword id="KW-0143">Chaperone</keyword>
<keyword id="KW-1015">Disulfide bond</keyword>
<keyword id="KW-0249">Electron transport</keyword>
<keyword id="KW-0472">Membrane</keyword>
<keyword id="KW-0560">Oxidoreductase</keyword>
<keyword id="KW-0676">Redox-active center</keyword>
<keyword id="KW-0812">Transmembrane</keyword>
<keyword id="KW-1133">Transmembrane helix</keyword>
<keyword id="KW-0813">Transport</keyword>
<feature type="chain" id="PRO_0000298355" description="Disulfide bond formation protein B">
    <location>
        <begin position="1"/>
        <end position="165"/>
    </location>
</feature>
<feature type="topological domain" description="Cytoplasmic" evidence="1">
    <location>
        <begin position="1"/>
        <end position="11"/>
    </location>
</feature>
<feature type="transmembrane region" description="Helical" evidence="1">
    <location>
        <begin position="12"/>
        <end position="28"/>
    </location>
</feature>
<feature type="topological domain" description="Periplasmic" evidence="1">
    <location>
        <begin position="29"/>
        <end position="46"/>
    </location>
</feature>
<feature type="transmembrane region" description="Helical" evidence="1">
    <location>
        <begin position="47"/>
        <end position="61"/>
    </location>
</feature>
<feature type="topological domain" description="Cytoplasmic" evidence="1">
    <location>
        <begin position="62"/>
        <end position="66"/>
    </location>
</feature>
<feature type="transmembrane region" description="Helical" evidence="1">
    <location>
        <begin position="67"/>
        <end position="84"/>
    </location>
</feature>
<feature type="topological domain" description="Periplasmic" evidence="1">
    <location>
        <begin position="85"/>
        <end position="142"/>
    </location>
</feature>
<feature type="transmembrane region" description="Helical" evidence="1">
    <location>
        <begin position="143"/>
        <end position="161"/>
    </location>
</feature>
<feature type="topological domain" description="Cytoplasmic" evidence="1">
    <location>
        <begin position="162"/>
        <end position="165"/>
    </location>
</feature>
<feature type="disulfide bond" description="Redox-active" evidence="1">
    <location>
        <begin position="38"/>
        <end position="41"/>
    </location>
</feature>
<feature type="disulfide bond" description="Redox-active" evidence="1">
    <location>
        <begin position="99"/>
        <end position="128"/>
    </location>
</feature>
<sequence length="165" mass="17977">MICSKVPVRAWFATLGLGCLGLVAVGMALQTLLHLAPCPLCIFQRLLYIMIGFVGLLGFVLPAGRLLWSTLAAGLGVLGFGVAAYQTWMQAFPDLAPECGFTDPNAIERLVDWLGMEWPSMFLATGFCTSRDWELLGLSMANWSVLIFAGIVAYAVLLFVRKDRA</sequence>
<protein>
    <recommendedName>
        <fullName evidence="1">Disulfide bond formation protein B</fullName>
    </recommendedName>
    <alternativeName>
        <fullName evidence="1">Disulfide oxidoreductase</fullName>
    </alternativeName>
</protein>
<gene>
    <name evidence="1" type="primary">dsbB</name>
    <name type="ordered locus">Daro_3145</name>
</gene>
<name>DSBB_DECAR</name>
<organism>
    <name type="scientific">Dechloromonas aromatica (strain RCB)</name>
    <dbReference type="NCBI Taxonomy" id="159087"/>
    <lineage>
        <taxon>Bacteria</taxon>
        <taxon>Pseudomonadati</taxon>
        <taxon>Pseudomonadota</taxon>
        <taxon>Betaproteobacteria</taxon>
        <taxon>Rhodocyclales</taxon>
        <taxon>Azonexaceae</taxon>
        <taxon>Dechloromonas</taxon>
    </lineage>
</organism>
<dbReference type="EMBL" id="CP000089">
    <property type="protein sequence ID" value="AAZ47875.1"/>
    <property type="molecule type" value="Genomic_DNA"/>
</dbReference>
<dbReference type="STRING" id="159087.Daro_3145"/>
<dbReference type="KEGG" id="dar:Daro_3145"/>
<dbReference type="eggNOG" id="COG1495">
    <property type="taxonomic scope" value="Bacteria"/>
</dbReference>
<dbReference type="HOGENOM" id="CLU_098660_1_0_4"/>
<dbReference type="OrthoDB" id="3711263at2"/>
<dbReference type="GO" id="GO:0005886">
    <property type="term" value="C:plasma membrane"/>
    <property type="evidence" value="ECO:0007669"/>
    <property type="project" value="UniProtKB-SubCell"/>
</dbReference>
<dbReference type="GO" id="GO:0009055">
    <property type="term" value="F:electron transfer activity"/>
    <property type="evidence" value="ECO:0007669"/>
    <property type="project" value="UniProtKB-UniRule"/>
</dbReference>
<dbReference type="GO" id="GO:0015035">
    <property type="term" value="F:protein-disulfide reductase activity"/>
    <property type="evidence" value="ECO:0007669"/>
    <property type="project" value="UniProtKB-UniRule"/>
</dbReference>
<dbReference type="GO" id="GO:0006457">
    <property type="term" value="P:protein folding"/>
    <property type="evidence" value="ECO:0007669"/>
    <property type="project" value="InterPro"/>
</dbReference>
<dbReference type="Gene3D" id="1.20.1550.10">
    <property type="entry name" value="DsbB-like"/>
    <property type="match status" value="1"/>
</dbReference>
<dbReference type="HAMAP" id="MF_00286">
    <property type="entry name" value="DsbB"/>
    <property type="match status" value="1"/>
</dbReference>
<dbReference type="InterPro" id="IPR003752">
    <property type="entry name" value="DiS_bond_form_DsbB/BdbC"/>
</dbReference>
<dbReference type="InterPro" id="IPR022920">
    <property type="entry name" value="Disulphide_bond_form_DsbB"/>
</dbReference>
<dbReference type="InterPro" id="IPR050183">
    <property type="entry name" value="DsbB"/>
</dbReference>
<dbReference type="InterPro" id="IPR023380">
    <property type="entry name" value="DsbB-like_sf"/>
</dbReference>
<dbReference type="PANTHER" id="PTHR36570">
    <property type="entry name" value="DISULFIDE BOND FORMATION PROTEIN B"/>
    <property type="match status" value="1"/>
</dbReference>
<dbReference type="PANTHER" id="PTHR36570:SF3">
    <property type="entry name" value="DISULFIDE BOND FORMATION PROTEIN B"/>
    <property type="match status" value="1"/>
</dbReference>
<dbReference type="Pfam" id="PF02600">
    <property type="entry name" value="DsbB"/>
    <property type="match status" value="1"/>
</dbReference>
<dbReference type="SUPFAM" id="SSF158442">
    <property type="entry name" value="DsbB-like"/>
    <property type="match status" value="1"/>
</dbReference>
<evidence type="ECO:0000255" key="1">
    <source>
        <dbReference type="HAMAP-Rule" id="MF_00286"/>
    </source>
</evidence>
<proteinExistence type="inferred from homology"/>